<protein>
    <recommendedName>
        <fullName evidence="6">Eukaryotic translation initiation factor 4E-binding protein Mextli homolog</fullName>
    </recommendedName>
</protein>
<comment type="function">
    <text evidence="1">Plays a role in promoting translation.</text>
</comment>
<comment type="subunit">
    <text evidence="4">Interacts with eukaryotic translation initiation factor ife-3.</text>
</comment>
<comment type="interaction">
    <interactant intactId="EBI-330111">
        <id>Q9XW13</id>
    </interactant>
    <interactant intactId="EBI-330140">
        <id>Q8MQ52</id>
        <label>CELE_F44A2.5</label>
    </interactant>
    <organismsDiffer>false</organismsDiffer>
    <experiments>4</experiments>
</comment>
<comment type="interaction">
    <interactant intactId="EBI-330111">
        <id>Q9XW13</id>
    </interactant>
    <interactant intactId="EBI-330154">
        <id>Q21693</id>
        <label>ife-2</label>
    </interactant>
    <organismsDiffer>false</organismsDiffer>
    <experiments>5</experiments>
</comment>
<comment type="interaction">
    <interactant intactId="EBI-330111">
        <id>Q9XW13</id>
    </interactant>
    <interactant intactId="EBI-330119">
        <id>O61955</id>
        <label>ife-3</label>
    </interactant>
    <organismsDiffer>false</organismsDiffer>
    <experiments>5</experiments>
</comment>
<comment type="subcellular location">
    <subcellularLocation>
        <location evidence="1">Cytoplasm</location>
    </subcellularLocation>
</comment>
<comment type="domain">
    <text evidence="4">Binds to ife-3 using a bipartite interface in the C-terminal domain which comprises a canonical helix which engages the ife-3 dorsal surface and a non-canonical helix which engages the ife-3 lateral surface.</text>
</comment>
<organism evidence="7">
    <name type="scientific">Caenorhabditis elegans</name>
    <dbReference type="NCBI Taxonomy" id="6239"/>
    <lineage>
        <taxon>Eukaryota</taxon>
        <taxon>Metazoa</taxon>
        <taxon>Ecdysozoa</taxon>
        <taxon>Nematoda</taxon>
        <taxon>Chromadorea</taxon>
        <taxon>Rhabditida</taxon>
        <taxon>Rhabditina</taxon>
        <taxon>Rhabditomorpha</taxon>
        <taxon>Rhabditoidea</taxon>
        <taxon>Rhabditidae</taxon>
        <taxon>Peloderinae</taxon>
        <taxon>Caenorhabditis</taxon>
    </lineage>
</organism>
<gene>
    <name evidence="8" type="primary">mxt-1</name>
    <name evidence="5" type="synonym">mxt</name>
    <name evidence="8" type="ORF">Y18D10A.8</name>
</gene>
<name>MXT_CAEEL</name>
<sequence length="507" mass="56571">MLHNYDDFGGGKMQGAPQVPRNTLLSVDQQLQLMNTINNMVRASQFTSQLANTIFTLCAQLKTSGSMLEQSHKNELNKVFTSLRQACCRDNGQLGTPCRLKIMELVELRAMNWRTNLAHSQYYVNRPEGQHDPAPTVGIPPSATSPPTQVTSSVTSPVPSSPQPPMQFVPQNPMMFQDPMAANHNAGGIFFIPAASTWMNPLMPMPPNPFLPHSMIPPDHQMFLRQRSLNKKPNNLMNKTLQLRHEMIIRNSDSGKIMGVKGRRVAAVEQLTNTVISFQKVDSKSKERTLTITASTMEDIERAKDMIIDTIRRNMSPMRTDMSIPPPNQYSGMSSENQSIPSQQNTANIDEDDDDDDEDIKLEQTSDGKLTFHCDDPELLAAAQEALSAYLRVRARPSAEEREKKKERRKSMPLQQTARDQQEPVMLKPAKTFHGSTPNLADGLAATTTVVVASIPQPMVPNVHASGDNPIRYNRDTLMTARDTKRAPIPDEMLQEINRVAPDILIA</sequence>
<feature type="chain" id="PRO_0000436264" description="Eukaryotic translation initiation factor 4E-binding protein Mextli homolog" evidence="6">
    <location>
        <begin position="1"/>
        <end position="507"/>
    </location>
</feature>
<feature type="domain" description="KH" evidence="2">
    <location>
        <begin position="242"/>
        <end position="307"/>
    </location>
</feature>
<feature type="region of interest" description="Disordered" evidence="3">
    <location>
        <begin position="126"/>
        <end position="163"/>
    </location>
</feature>
<feature type="region of interest" description="Disordered" evidence="3">
    <location>
        <begin position="314"/>
        <end position="360"/>
    </location>
</feature>
<feature type="region of interest" description="Disordered" evidence="3">
    <location>
        <begin position="395"/>
        <end position="424"/>
    </location>
</feature>
<feature type="compositionally biased region" description="Low complexity" evidence="3">
    <location>
        <begin position="140"/>
        <end position="158"/>
    </location>
</feature>
<feature type="compositionally biased region" description="Polar residues" evidence="3">
    <location>
        <begin position="329"/>
        <end position="348"/>
    </location>
</feature>
<feature type="compositionally biased region" description="Acidic residues" evidence="3">
    <location>
        <begin position="349"/>
        <end position="360"/>
    </location>
</feature>
<feature type="mutagenesis site" description="Reduced binding to ife-3." evidence="4">
    <original>M</original>
    <variation>D</variation>
    <location>
        <position position="493"/>
    </location>
</feature>
<feature type="mutagenesis site" description="Reduced binding to ife-3; when associated with D-504." evidence="4">
    <original>I</original>
    <variation>D</variation>
    <location>
        <position position="497"/>
    </location>
</feature>
<feature type="mutagenesis site" description="Reduced binding to ife-3; when associated with D-497." evidence="4">
    <original>I</original>
    <variation>D</variation>
    <location>
        <position position="504"/>
    </location>
</feature>
<feature type="helix" evidence="11">
    <location>
        <begin position="475"/>
        <end position="481"/>
    </location>
</feature>
<feature type="helix" evidence="11">
    <location>
        <begin position="491"/>
        <end position="500"/>
    </location>
</feature>
<feature type="helix" evidence="11">
    <location>
        <begin position="502"/>
        <end position="504"/>
    </location>
</feature>
<proteinExistence type="evidence at protein level"/>
<keyword id="KW-0002">3D-structure</keyword>
<keyword id="KW-0963">Cytoplasm</keyword>
<keyword id="KW-1185">Reference proteome</keyword>
<keyword id="KW-0694">RNA-binding</keyword>
<keyword id="KW-0810">Translation regulation</keyword>
<dbReference type="EMBL" id="BX284601">
    <property type="protein sequence ID" value="CAA22321.1"/>
    <property type="molecule type" value="Genomic_DNA"/>
</dbReference>
<dbReference type="PIR" id="T26530">
    <property type="entry name" value="T26530"/>
</dbReference>
<dbReference type="RefSeq" id="NP_493246.1">
    <property type="nucleotide sequence ID" value="NM_060845.6"/>
</dbReference>
<dbReference type="PDB" id="5ABX">
    <property type="method" value="X-ray"/>
    <property type="resolution" value="1.66 A"/>
    <property type="chains" value="B=471-507"/>
</dbReference>
<dbReference type="PDB" id="5ABY">
    <property type="method" value="X-ray"/>
    <property type="resolution" value="1.95 A"/>
    <property type="chains" value="B/D/F=471-507"/>
</dbReference>
<dbReference type="PDBsum" id="5ABX"/>
<dbReference type="PDBsum" id="5ABY"/>
<dbReference type="SMR" id="Q9XW13"/>
<dbReference type="ComplexPortal" id="CPX-3482">
    <property type="entry name" value="Eukaryotic translation initiation factor 4E-Mxt complex"/>
</dbReference>
<dbReference type="DIP" id="DIP-27212N"/>
<dbReference type="FunCoup" id="Q9XW13">
    <property type="interactions" value="1"/>
</dbReference>
<dbReference type="IntAct" id="Q9XW13">
    <property type="interactions" value="10"/>
</dbReference>
<dbReference type="STRING" id="6239.Y18D10A.8.1"/>
<dbReference type="PaxDb" id="6239-Y18D10A.8"/>
<dbReference type="PeptideAtlas" id="Q9XW13"/>
<dbReference type="EnsemblMetazoa" id="Y18D10A.8.1">
    <property type="protein sequence ID" value="Y18D10A.8.1"/>
    <property type="gene ID" value="WBGene00012478"/>
</dbReference>
<dbReference type="GeneID" id="173151"/>
<dbReference type="KEGG" id="cel:CELE_Y18D10A.8"/>
<dbReference type="UCSC" id="Y18D10A.8">
    <property type="organism name" value="c. elegans"/>
</dbReference>
<dbReference type="AGR" id="WB:WBGene00012478"/>
<dbReference type="CTD" id="173151"/>
<dbReference type="WormBase" id="Y18D10A.8">
    <property type="protein sequence ID" value="CE21404"/>
    <property type="gene ID" value="WBGene00012478"/>
    <property type="gene designation" value="mxt-1"/>
</dbReference>
<dbReference type="eggNOG" id="ENOG502QRYP">
    <property type="taxonomic scope" value="Eukaryota"/>
</dbReference>
<dbReference type="GeneTree" id="ENSGT00520000058221"/>
<dbReference type="HOGENOM" id="CLU_596168_0_0_1"/>
<dbReference type="InParanoid" id="Q9XW13"/>
<dbReference type="OMA" id="QKVDSKC"/>
<dbReference type="OrthoDB" id="6357832at2759"/>
<dbReference type="PhylomeDB" id="Q9XW13"/>
<dbReference type="PRO" id="PR:Q9XW13"/>
<dbReference type="Proteomes" id="UP000001940">
    <property type="component" value="Chromosome I"/>
</dbReference>
<dbReference type="Bgee" id="WBGene00012478">
    <property type="expression patterns" value="Expressed in pharyngeal muscle cell (C elegans) and 3 other cell types or tissues"/>
</dbReference>
<dbReference type="GO" id="GO:0005737">
    <property type="term" value="C:cytoplasm"/>
    <property type="evidence" value="ECO:0000318"/>
    <property type="project" value="GO_Central"/>
</dbReference>
<dbReference type="GO" id="GO:0034518">
    <property type="term" value="C:RNA cap binding complex"/>
    <property type="evidence" value="ECO:0000318"/>
    <property type="project" value="GO_Central"/>
</dbReference>
<dbReference type="GO" id="GO:0070992">
    <property type="term" value="C:translation initiation complex"/>
    <property type="evidence" value="ECO:0000303"/>
    <property type="project" value="ComplexPortal"/>
</dbReference>
<dbReference type="GO" id="GO:0008190">
    <property type="term" value="F:eukaryotic initiation factor 4E binding"/>
    <property type="evidence" value="ECO:0000318"/>
    <property type="project" value="GO_Central"/>
</dbReference>
<dbReference type="GO" id="GO:0003723">
    <property type="term" value="F:RNA binding"/>
    <property type="evidence" value="ECO:0007669"/>
    <property type="project" value="UniProtKB-KW"/>
</dbReference>
<dbReference type="GO" id="GO:0003743">
    <property type="term" value="F:translation initiation factor activity"/>
    <property type="evidence" value="ECO:0000318"/>
    <property type="project" value="GO_Central"/>
</dbReference>
<dbReference type="GO" id="GO:0045727">
    <property type="term" value="P:positive regulation of translation"/>
    <property type="evidence" value="ECO:0000318"/>
    <property type="project" value="GO_Central"/>
</dbReference>
<dbReference type="GO" id="GO:1901190">
    <property type="term" value="P:regulation of formation of translation initiation ternary complex"/>
    <property type="evidence" value="ECO:0000318"/>
    <property type="project" value="GO_Central"/>
</dbReference>
<dbReference type="GO" id="GO:0006413">
    <property type="term" value="P:translational initiation"/>
    <property type="evidence" value="ECO:0000303"/>
    <property type="project" value="ComplexPortal"/>
</dbReference>
<dbReference type="CDD" id="cd22454">
    <property type="entry name" value="KH-I_Mextli_like"/>
    <property type="match status" value="1"/>
</dbReference>
<dbReference type="FunFam" id="1.25.40.180:FF:000112">
    <property type="entry name" value="Eukaryotic translation initiation factor 4E-binding protein Mextli homolog"/>
    <property type="match status" value="1"/>
</dbReference>
<dbReference type="FunFam" id="3.30.1370.10:FF:000164">
    <property type="entry name" value="Protein CBG07980"/>
    <property type="match status" value="1"/>
</dbReference>
<dbReference type="Gene3D" id="1.25.40.180">
    <property type="match status" value="1"/>
</dbReference>
<dbReference type="Gene3D" id="3.30.1370.10">
    <property type="entry name" value="K Homology domain, type 1"/>
    <property type="match status" value="1"/>
</dbReference>
<dbReference type="InterPro" id="IPR004087">
    <property type="entry name" value="KH_dom"/>
</dbReference>
<dbReference type="InterPro" id="IPR004088">
    <property type="entry name" value="KH_dom_type_1"/>
</dbReference>
<dbReference type="InterPro" id="IPR036612">
    <property type="entry name" value="KH_dom_type_1_sf"/>
</dbReference>
<dbReference type="InterPro" id="IPR040160">
    <property type="entry name" value="Mxt"/>
</dbReference>
<dbReference type="PANTHER" id="PTHR20849">
    <property type="entry name" value="EUKARYOTIC TRANSLATION INITIATION FACTOR 4E-BINDING PROTEIN MEXTLI"/>
    <property type="match status" value="1"/>
</dbReference>
<dbReference type="PANTHER" id="PTHR20849:SF2">
    <property type="entry name" value="EUKARYOTIC TRANSLATION INITIATION FACTOR 4E-BINDING PROTEIN MEXTLI"/>
    <property type="match status" value="1"/>
</dbReference>
<dbReference type="Pfam" id="PF00013">
    <property type="entry name" value="KH_1"/>
    <property type="match status" value="1"/>
</dbReference>
<dbReference type="SMART" id="SM00322">
    <property type="entry name" value="KH"/>
    <property type="match status" value="1"/>
</dbReference>
<dbReference type="SUPFAM" id="SSF54791">
    <property type="entry name" value="Eukaryotic type KH-domain (KH-domain type I)"/>
    <property type="match status" value="1"/>
</dbReference>
<dbReference type="PROSITE" id="PS50084">
    <property type="entry name" value="KH_TYPE_1"/>
    <property type="match status" value="1"/>
</dbReference>
<evidence type="ECO:0000250" key="1">
    <source>
        <dbReference type="UniProtKB" id="Q9VR35"/>
    </source>
</evidence>
<evidence type="ECO:0000255" key="2">
    <source>
        <dbReference type="PROSITE-ProRule" id="PRU00117"/>
    </source>
</evidence>
<evidence type="ECO:0000256" key="3">
    <source>
        <dbReference type="SAM" id="MobiDB-lite"/>
    </source>
</evidence>
<evidence type="ECO:0000269" key="4">
    <source>
    </source>
</evidence>
<evidence type="ECO:0000303" key="5">
    <source>
    </source>
</evidence>
<evidence type="ECO:0000305" key="6"/>
<evidence type="ECO:0000312" key="7">
    <source>
        <dbReference type="Proteomes" id="UP000001940"/>
    </source>
</evidence>
<evidence type="ECO:0000312" key="8">
    <source>
        <dbReference type="WormBase" id="Y18D10A.8"/>
    </source>
</evidence>
<evidence type="ECO:0007744" key="9">
    <source>
        <dbReference type="PDB" id="5ABX"/>
    </source>
</evidence>
<evidence type="ECO:0007744" key="10">
    <source>
        <dbReference type="PDB" id="5ABY"/>
    </source>
</evidence>
<evidence type="ECO:0007829" key="11">
    <source>
        <dbReference type="PDB" id="5ABX"/>
    </source>
</evidence>
<accession>Q9XW13</accession>
<reference evidence="7" key="1">
    <citation type="journal article" date="1998" name="Science">
        <title>Genome sequence of the nematode C. elegans: a platform for investigating biology.</title>
        <authorList>
            <consortium name="The C. elegans sequencing consortium"/>
        </authorList>
    </citation>
    <scope>NUCLEOTIDE SEQUENCE [LARGE SCALE GENOMIC DNA]</scope>
    <source>
        <strain evidence="7">Bristol N2</strain>
    </source>
</reference>
<reference evidence="9 10" key="2">
    <citation type="journal article" date="2015" name="Genes Dev.">
        <title>Mextli proteins use both canonical bipartite and novel tripartite binding modes to form eIF4E complexes that display differential sensitivity to 4E-BP regulation.</title>
        <authorList>
            <person name="Peter D."/>
            <person name="Weber R."/>
            <person name="Kone C."/>
            <person name="Chung M.Y."/>
            <person name="Ebertsch L."/>
            <person name="Truffault V."/>
            <person name="Weichenrieder O."/>
            <person name="Igreja C."/>
            <person name="Izaurralde E."/>
        </authorList>
    </citation>
    <scope>X-RAY CRYSTALLOGRAPHY (1.66 ANGSTROMS) OF 471-507 IN COMPLEX WITH IFE-3</scope>
    <scope>INTERACTION WITH IFE-3</scope>
    <scope>DOMAIN</scope>
    <scope>MUTAGENESIS OF MET-493; ILE-497 AND ILE-504</scope>
</reference>